<feature type="chain" id="PRO_0000366690" description="RNA-free ribonuclease P">
    <location>
        <begin position="1"/>
        <end position="196"/>
    </location>
</feature>
<accession>B5YIK6</accession>
<keyword id="KW-0255">Endonuclease</keyword>
<keyword id="KW-0378">Hydrolase</keyword>
<keyword id="KW-0540">Nuclease</keyword>
<keyword id="KW-1185">Reference proteome</keyword>
<keyword id="KW-0819">tRNA processing</keyword>
<organism>
    <name type="scientific">Thermodesulfovibrio yellowstonii (strain ATCC 51303 / DSM 11347 / YP87)</name>
    <dbReference type="NCBI Taxonomy" id="289376"/>
    <lineage>
        <taxon>Bacteria</taxon>
        <taxon>Pseudomonadati</taxon>
        <taxon>Nitrospirota</taxon>
        <taxon>Thermodesulfovibrionia</taxon>
        <taxon>Thermodesulfovibrionales</taxon>
        <taxon>Thermodesulfovibrionaceae</taxon>
        <taxon>Thermodesulfovibrio</taxon>
    </lineage>
</organism>
<reference key="1">
    <citation type="submission" date="2008-08" db="EMBL/GenBank/DDBJ databases">
        <title>The complete genome sequence of Thermodesulfovibrio yellowstonii strain ATCC 51303 / DSM 11347 / YP87.</title>
        <authorList>
            <person name="Dodson R.J."/>
            <person name="Durkin A.S."/>
            <person name="Wu M."/>
            <person name="Eisen J."/>
            <person name="Sutton G."/>
        </authorList>
    </citation>
    <scope>NUCLEOTIDE SEQUENCE [LARGE SCALE GENOMIC DNA]</scope>
    <source>
        <strain>ATCC 51303 / DSM 11347 / YP87</strain>
    </source>
</reference>
<protein>
    <recommendedName>
        <fullName evidence="1">RNA-free ribonuclease P</fullName>
        <shortName evidence="1">RNA-free RNase P</shortName>
        <ecNumber evidence="1">3.1.26.5</ecNumber>
    </recommendedName>
    <alternativeName>
        <fullName evidence="1">Protein-only RNase P</fullName>
    </alternativeName>
</protein>
<gene>
    <name type="ordered locus">THEYE_A0318</name>
</gene>
<evidence type="ECO:0000255" key="1">
    <source>
        <dbReference type="HAMAP-Rule" id="MF_01078"/>
    </source>
</evidence>
<name>RFRNP_THEYD</name>
<sequence length="196" mass="23158">MINFFRKKRKIVLDTSVFINPDIRNFFGENPEKAIEEFIKIAKRAKNLEFYIPSTVFKELMYFVDEKKIPKDFYFLIRIKSPDKHRSVCPAIFFYELVEEMRQRINKGLRVAENAVRNVNQKDADEIIKDLRKKYREALREGIIDSKEDVDLIFLSMELQATLITGDQGLIKWADKLGIEWIVPEKFKDFLLSAIG</sequence>
<dbReference type="EC" id="3.1.26.5" evidence="1"/>
<dbReference type="EMBL" id="CP001147">
    <property type="protein sequence ID" value="ACI20493.1"/>
    <property type="molecule type" value="Genomic_DNA"/>
</dbReference>
<dbReference type="RefSeq" id="WP_012545229.1">
    <property type="nucleotide sequence ID" value="NC_011296.1"/>
</dbReference>
<dbReference type="RefSeq" id="YP_002248165.1">
    <property type="nucleotide sequence ID" value="NC_011296.1"/>
</dbReference>
<dbReference type="SMR" id="B5YIK6"/>
<dbReference type="STRING" id="289376.THEYE_A0318"/>
<dbReference type="EnsemblBacteria" id="ACI20493">
    <property type="protein sequence ID" value="ACI20493"/>
    <property type="gene ID" value="THEYE_A0318"/>
</dbReference>
<dbReference type="KEGG" id="tye:THEYE_A0318"/>
<dbReference type="PATRIC" id="fig|289376.4.peg.311"/>
<dbReference type="eggNOG" id="COG1458">
    <property type="taxonomic scope" value="Bacteria"/>
</dbReference>
<dbReference type="HOGENOM" id="CLU_109672_0_0_0"/>
<dbReference type="InParanoid" id="B5YIK6"/>
<dbReference type="OrthoDB" id="263154at2"/>
<dbReference type="Proteomes" id="UP000000718">
    <property type="component" value="Chromosome"/>
</dbReference>
<dbReference type="GO" id="GO:0004526">
    <property type="term" value="F:ribonuclease P activity"/>
    <property type="evidence" value="ECO:0007669"/>
    <property type="project" value="UniProtKB-UniRule"/>
</dbReference>
<dbReference type="GO" id="GO:0001682">
    <property type="term" value="P:tRNA 5'-leader removal"/>
    <property type="evidence" value="ECO:0007669"/>
    <property type="project" value="UniProtKB-UniRule"/>
</dbReference>
<dbReference type="CDD" id="cd18691">
    <property type="entry name" value="PIN_VapC-like"/>
    <property type="match status" value="1"/>
</dbReference>
<dbReference type="Gene3D" id="3.40.50.1010">
    <property type="entry name" value="5'-nuclease"/>
    <property type="match status" value="1"/>
</dbReference>
<dbReference type="HAMAP" id="MF_01078">
    <property type="entry name" value="RNA_free_RNase_P"/>
    <property type="match status" value="1"/>
</dbReference>
<dbReference type="InterPro" id="IPR029060">
    <property type="entry name" value="PIN-like_dom_sf"/>
</dbReference>
<dbReference type="InterPro" id="IPR014856">
    <property type="entry name" value="RNA_free_RNase_P"/>
</dbReference>
<dbReference type="NCBIfam" id="NF003344">
    <property type="entry name" value="PRK04358.1-5"/>
    <property type="match status" value="1"/>
</dbReference>
<dbReference type="NCBIfam" id="TIGR03875">
    <property type="entry name" value="RNA_lig_partner"/>
    <property type="match status" value="1"/>
</dbReference>
<dbReference type="PANTHER" id="PTHR41173:SF1">
    <property type="entry name" value="RNA-FREE RIBONUCLEASE P"/>
    <property type="match status" value="1"/>
</dbReference>
<dbReference type="PANTHER" id="PTHR41173">
    <property type="entry name" value="UPF0278 PROTEIN TK1425"/>
    <property type="match status" value="1"/>
</dbReference>
<dbReference type="Pfam" id="PF08745">
    <property type="entry name" value="PIN_5"/>
    <property type="match status" value="1"/>
</dbReference>
<dbReference type="SUPFAM" id="SSF88723">
    <property type="entry name" value="PIN domain-like"/>
    <property type="match status" value="1"/>
</dbReference>
<comment type="function">
    <text evidence="1">RNA-free RNase P that catalyzes the removal of the 5'-leader sequence from pre-tRNA to produce the mature 5'-terminus.</text>
</comment>
<comment type="catalytic activity">
    <reaction evidence="1">
        <text>Endonucleolytic cleavage of RNA, removing 5'-extranucleotides from tRNA precursor.</text>
        <dbReference type="EC" id="3.1.26.5"/>
    </reaction>
</comment>
<comment type="similarity">
    <text evidence="1">Belongs to the HARP family.</text>
</comment>
<proteinExistence type="inferred from homology"/>